<sequence>MADWFHSALKTCTHVCDFSDIKASSQQDFFCCDSMRGKLSEPRKVLLVSCFVSFTGSFYGSNRNVRGQVQLGMQQDDGVVRPIGYIPIGGYLYHDDYGYYQGEKTFNLDIESDYLKPDEDFWKRFTINIVNDKGLDDRCDVKCYVVHTMRIKV</sequence>
<proteinExistence type="inferred from homology"/>
<protein>
    <recommendedName>
        <fullName>Putative nuclear shuttle protein</fullName>
    </recommendedName>
</protein>
<organismHost>
    <name type="scientific">Trifolium subterraneum</name>
    <name type="common">Subterranean clover</name>
    <dbReference type="NCBI Taxonomy" id="3900"/>
</organismHost>
<reference key="1">
    <citation type="journal article" date="1995" name="Virology">
        <title>Sequence of subterranean clover stunt virus DNA: affinities with the geminiviruses.</title>
        <authorList>
            <person name="Boevink P.C."/>
            <person name="Chu P.W.G."/>
            <person name="Keese P.K."/>
        </authorList>
    </citation>
    <scope>NUCLEOTIDE SEQUENCE [GENOMIC DNA]</scope>
</reference>
<feature type="chain" id="PRO_0000378532" description="Putative nuclear shuttle protein">
    <location>
        <begin position="1"/>
        <end position="153"/>
    </location>
</feature>
<accession>Q87011</accession>
<evidence type="ECO:0000250" key="1"/>
<evidence type="ECO:0000305" key="2"/>
<name>NSP_SCSVF</name>
<gene>
    <name type="primary">DNA-N</name>
    <name type="synonym">C4</name>
</gene>
<dbReference type="EMBL" id="U16733">
    <property type="protein sequence ID" value="AAA68020.1"/>
    <property type="molecule type" value="Genomic_DNA"/>
</dbReference>
<dbReference type="Proteomes" id="UP001515400">
    <property type="component" value="Genome"/>
</dbReference>
<dbReference type="GO" id="GO:0030430">
    <property type="term" value="C:host cell cytoplasm"/>
    <property type="evidence" value="ECO:0007669"/>
    <property type="project" value="UniProtKB-SubCell"/>
</dbReference>
<dbReference type="GO" id="GO:0042025">
    <property type="term" value="C:host cell nucleus"/>
    <property type="evidence" value="ECO:0007669"/>
    <property type="project" value="UniProtKB-SubCell"/>
</dbReference>
<dbReference type="InterPro" id="IPR008706">
    <property type="entry name" value="Nanovirus_C8"/>
</dbReference>
<dbReference type="Pfam" id="PF05629">
    <property type="entry name" value="Nanovirus_C8"/>
    <property type="match status" value="1"/>
</dbReference>
<comment type="function">
    <text>Putative nuclear shuttle protein.</text>
</comment>
<comment type="subcellular location">
    <subcellularLocation>
        <location evidence="1">Host nucleus</location>
    </subcellularLocation>
    <subcellularLocation>
        <location evidence="1">Host cytoplasm</location>
    </subcellularLocation>
</comment>
<comment type="similarity">
    <text evidence="2">Belongs to the nanoviridae nuclear shuttle protein family.</text>
</comment>
<organism>
    <name type="scientific">Subterranean clover stunt virus (strain F)</name>
    <name type="common">SCSV</name>
    <dbReference type="NCBI Taxonomy" id="291607"/>
    <lineage>
        <taxon>Viruses</taxon>
        <taxon>Monodnaviria</taxon>
        <taxon>Shotokuvirae</taxon>
        <taxon>Cressdnaviricota</taxon>
        <taxon>Arfiviricetes</taxon>
        <taxon>Mulpavirales</taxon>
        <taxon>Nanoviridae</taxon>
        <taxon>Nanovirus</taxon>
        <taxon>Subterranean clover stunt virus</taxon>
    </lineage>
</organism>
<keyword id="KW-1035">Host cytoplasm</keyword>
<keyword id="KW-1048">Host nucleus</keyword>
<keyword id="KW-1185">Reference proteome</keyword>